<reference key="1">
    <citation type="journal article" date="2002" name="Proc. Natl. Acad. Sci. U.S.A.">
        <title>The vitelliform macular dystrophy protein defines a new family of chloride channels.</title>
        <authorList>
            <person name="Sun H."/>
            <person name="Tsunenari T."/>
            <person name="Yau K.-W."/>
            <person name="Nathans J."/>
        </authorList>
    </citation>
    <scope>NUCLEOTIDE SEQUENCE [MRNA]</scope>
    <scope>FUNCTION</scope>
    <scope>SUBUNIT</scope>
</reference>
<reference key="2">
    <citation type="journal article" date="1998" name="Science">
        <title>Genome sequence of the nematode C. elegans: a platform for investigating biology.</title>
        <authorList>
            <consortium name="The C. elegans sequencing consortium"/>
        </authorList>
    </citation>
    <scope>NUCLEOTIDE SEQUENCE [LARGE SCALE GENOMIC DNA]</scope>
    <source>
        <strain>Bristol N2</strain>
    </source>
</reference>
<sequence length="525" mass="60485">MTVNYNLDVSSASIFSFLRLQLRWKGSIWKYLLKELFMFIIAFITVSSVYRSNLIIGEKTRKIWDNFAALFDQNMDFIPLTFMLGFFVTIIVRRWNDIFANLGWVENTAITVANYIRGTDDRTRMIRRNVIRYMVLAQVLVFRDCSIQVRKRFPTMESIVSAGFMLEHEKEALDNVQCGKLQKYFVPIQWSTGLLVDARAEGKIAADLLMNEIGKHIIEFRKMLALLSNYDWVPIPLAYPQVVFLAVRSYFFMALIARQSVLLDGKEPEQPSILYPTVPFVMSILQFIFVVGWMKVAESMINPLGEDDDDFECNYLLDRNLMIGLCIVDDNYNRTPSVEKDAFWCADVEPLYSVETAMIPKNPQIGSAANYDVKVDEEEVMMMPHMDDVDLFDFESTNNLIPRKTFSVISIQRPFGSRASLASRKRSMMFDQLRGRIAKKQHRSNMFQNSVSQASLHYFESQAPSEINLSTLEMTAPKRKSSTGKLGSMNVAEEQHKLSAEVLPIVIEEDEERSKMLEKDKNKNA</sequence>
<accession>Q21973</accession>
<proteinExistence type="evidence at protein level"/>
<dbReference type="EMBL" id="AY515708">
    <property type="protein sequence ID" value="AAR99658.1"/>
    <property type="molecule type" value="mRNA"/>
</dbReference>
<dbReference type="EMBL" id="Z73105">
    <property type="protein sequence ID" value="CAA97442.2"/>
    <property type="molecule type" value="Genomic_DNA"/>
</dbReference>
<dbReference type="PIR" id="T24210">
    <property type="entry name" value="T24210"/>
</dbReference>
<dbReference type="RefSeq" id="NP_502007.2">
    <property type="nucleotide sequence ID" value="NM_069606.6"/>
</dbReference>
<dbReference type="SMR" id="Q21973"/>
<dbReference type="BioGRID" id="43076">
    <property type="interactions" value="1"/>
</dbReference>
<dbReference type="FunCoup" id="Q21973">
    <property type="interactions" value="601"/>
</dbReference>
<dbReference type="STRING" id="6239.R13.3.1"/>
<dbReference type="TCDB" id="1.A.46.1.3">
    <property type="family name" value="the anion channel-forming bestrophin (bestrophin) family"/>
</dbReference>
<dbReference type="PaxDb" id="6239-R13.3"/>
<dbReference type="PeptideAtlas" id="Q21973"/>
<dbReference type="EnsemblMetazoa" id="R13.3.1">
    <property type="protein sequence ID" value="R13.3.1"/>
    <property type="gene ID" value="WBGene00011258"/>
</dbReference>
<dbReference type="GeneID" id="177975"/>
<dbReference type="KEGG" id="cel:CELE_R13.3"/>
<dbReference type="UCSC" id="R13.3">
    <property type="organism name" value="c. elegans"/>
</dbReference>
<dbReference type="AGR" id="WB:WBGene00011258"/>
<dbReference type="CTD" id="177975"/>
<dbReference type="WormBase" id="R13.3">
    <property type="protein sequence ID" value="CE32919"/>
    <property type="gene ID" value="WBGene00011258"/>
    <property type="gene designation" value="best-15"/>
</dbReference>
<dbReference type="eggNOG" id="KOG3547">
    <property type="taxonomic scope" value="Eukaryota"/>
</dbReference>
<dbReference type="HOGENOM" id="CLU_018069_7_2_1"/>
<dbReference type="InParanoid" id="Q21973"/>
<dbReference type="OMA" id="PIQWSTG"/>
<dbReference type="OrthoDB" id="201595at2759"/>
<dbReference type="PhylomeDB" id="Q21973"/>
<dbReference type="PRO" id="PR:Q21973"/>
<dbReference type="Proteomes" id="UP000001940">
    <property type="component" value="Chromosome IV"/>
</dbReference>
<dbReference type="Bgee" id="WBGene00011258">
    <property type="expression patterns" value="Expressed in adult organism and 2 other cell types or tissues"/>
</dbReference>
<dbReference type="GO" id="GO:0034707">
    <property type="term" value="C:chloride channel complex"/>
    <property type="evidence" value="ECO:0007669"/>
    <property type="project" value="UniProtKB-KW"/>
</dbReference>
<dbReference type="GO" id="GO:0005886">
    <property type="term" value="C:plasma membrane"/>
    <property type="evidence" value="ECO:0007669"/>
    <property type="project" value="UniProtKB-SubCell"/>
</dbReference>
<dbReference type="GO" id="GO:0005254">
    <property type="term" value="F:chloride channel activity"/>
    <property type="evidence" value="ECO:0000318"/>
    <property type="project" value="GO_Central"/>
</dbReference>
<dbReference type="InterPro" id="IPR000615">
    <property type="entry name" value="Bestrophin"/>
</dbReference>
<dbReference type="InterPro" id="IPR021134">
    <property type="entry name" value="Bestrophin-like"/>
</dbReference>
<dbReference type="PANTHER" id="PTHR10736">
    <property type="entry name" value="BESTROPHIN"/>
    <property type="match status" value="1"/>
</dbReference>
<dbReference type="PANTHER" id="PTHR10736:SF63">
    <property type="entry name" value="BESTROPHIN HOMOLOG-RELATED"/>
    <property type="match status" value="1"/>
</dbReference>
<dbReference type="Pfam" id="PF01062">
    <property type="entry name" value="Bestrophin"/>
    <property type="match status" value="1"/>
</dbReference>
<name>BST15_CAEEL</name>
<organism>
    <name type="scientific">Caenorhabditis elegans</name>
    <dbReference type="NCBI Taxonomy" id="6239"/>
    <lineage>
        <taxon>Eukaryota</taxon>
        <taxon>Metazoa</taxon>
        <taxon>Ecdysozoa</taxon>
        <taxon>Nematoda</taxon>
        <taxon>Chromadorea</taxon>
        <taxon>Rhabditida</taxon>
        <taxon>Rhabditina</taxon>
        <taxon>Rhabditomorpha</taxon>
        <taxon>Rhabditoidea</taxon>
        <taxon>Rhabditidae</taxon>
        <taxon>Peloderinae</taxon>
        <taxon>Caenorhabditis</taxon>
    </lineage>
</organism>
<comment type="function">
    <text evidence="2">Forms chloride channels.</text>
</comment>
<comment type="subunit">
    <text evidence="2">Forms oligomers.</text>
</comment>
<comment type="subcellular location">
    <subcellularLocation>
        <location>Cell membrane</location>
        <topology>Multi-pass membrane protein</topology>
    </subcellularLocation>
</comment>
<comment type="similarity">
    <text evidence="3">Belongs to the anion channel-forming bestrophin (TC 1.A.46) family. Calcium-sensitive chloride channel subfamily.</text>
</comment>
<protein>
    <recommendedName>
        <fullName>Bestrophin homolog 15</fullName>
    </recommendedName>
    <alternativeName>
        <fullName>Bestrophin-1</fullName>
        <shortName>ceBest1</shortName>
    </alternativeName>
</protein>
<evidence type="ECO:0000255" key="1"/>
<evidence type="ECO:0000269" key="2">
    <source>
    </source>
</evidence>
<evidence type="ECO:0000305" key="3"/>
<feature type="chain" id="PRO_0000143123" description="Bestrophin homolog 15">
    <location>
        <begin position="1"/>
        <end position="525"/>
    </location>
</feature>
<feature type="transmembrane region" description="Helical" evidence="1">
    <location>
        <begin position="36"/>
        <end position="56"/>
    </location>
</feature>
<feature type="transmembrane region" description="Helical" evidence="1">
    <location>
        <begin position="71"/>
        <end position="91"/>
    </location>
</feature>
<feature type="transmembrane region" description="Helical" evidence="1">
    <location>
        <begin position="237"/>
        <end position="257"/>
    </location>
</feature>
<feature type="transmembrane region" description="Helical" evidence="1">
    <location>
        <begin position="273"/>
        <end position="293"/>
    </location>
</feature>
<keyword id="KW-1003">Cell membrane</keyword>
<keyword id="KW-0868">Chloride</keyword>
<keyword id="KW-0869">Chloride channel</keyword>
<keyword id="KW-0407">Ion channel</keyword>
<keyword id="KW-0406">Ion transport</keyword>
<keyword id="KW-0472">Membrane</keyword>
<keyword id="KW-1185">Reference proteome</keyword>
<keyword id="KW-0812">Transmembrane</keyword>
<keyword id="KW-1133">Transmembrane helix</keyword>
<keyword id="KW-0813">Transport</keyword>
<gene>
    <name type="primary">best-15</name>
    <name type="ORF">R13.3</name>
</gene>